<gene>
    <name evidence="1" type="primary">atpD</name>
    <name type="ordered locus">CJJ81176_0142</name>
</gene>
<accession>A1VXJ0</accession>
<protein>
    <recommendedName>
        <fullName evidence="1">ATP synthase subunit beta</fullName>
        <ecNumber evidence="1">7.1.2.2</ecNumber>
    </recommendedName>
    <alternativeName>
        <fullName evidence="1">ATP synthase F1 sector subunit beta</fullName>
    </alternativeName>
    <alternativeName>
        <fullName evidence="1">F-ATPase subunit beta</fullName>
    </alternativeName>
</protein>
<organism>
    <name type="scientific">Campylobacter jejuni subsp. jejuni serotype O:23/36 (strain 81-176)</name>
    <dbReference type="NCBI Taxonomy" id="354242"/>
    <lineage>
        <taxon>Bacteria</taxon>
        <taxon>Pseudomonadati</taxon>
        <taxon>Campylobacterota</taxon>
        <taxon>Epsilonproteobacteria</taxon>
        <taxon>Campylobacterales</taxon>
        <taxon>Campylobacteraceae</taxon>
        <taxon>Campylobacter</taxon>
    </lineage>
</organism>
<sequence length="465" mass="50850">MQGFISQVLGPVVDVDFNDYLPQINEAIVVNFESEGKKHKLVLEVAAHLGDNRVRTIAMDMTDGLVRGLKAEALGAPISVPVGEKVLGRIFNVTGDLIDEGEEISFDKKWAIHRDPPAFEDQSTKSEIFETGIKVVDLLAPYAKGGKVGLFGGAGVGKTVIIMELIHNVAFKHSGYSVFAGVGERTREGNDLYNEMKESNVLDKVALCYGQMNEPPGARNRIALTGLTMAEYFRDEMGLDVLMFIDNIFRFSQSGSEMSALLGRIPSAVGYQPTLASEMGKFQERITSTKKGSITSVQAVYVPADDLTDPAPATVFAHLDATTVLNRAIAEKGIYPAVDPLDSTSRMLDPNIIGEEHYKVARGVQSVLQKYKDLQDIIAILGMDELSEEDKLVVERARKIEKFLSQPFFVAEVFTGSPGKYISLEDTIAGFKGILEGKYDHLPENAFYMVGNIDEAIAKADKLKG</sequence>
<keyword id="KW-0066">ATP synthesis</keyword>
<keyword id="KW-0067">ATP-binding</keyword>
<keyword id="KW-0997">Cell inner membrane</keyword>
<keyword id="KW-1003">Cell membrane</keyword>
<keyword id="KW-0139">CF(1)</keyword>
<keyword id="KW-0375">Hydrogen ion transport</keyword>
<keyword id="KW-0406">Ion transport</keyword>
<keyword id="KW-0472">Membrane</keyword>
<keyword id="KW-0547">Nucleotide-binding</keyword>
<keyword id="KW-1278">Translocase</keyword>
<keyword id="KW-0813">Transport</keyword>
<name>ATPB_CAMJJ</name>
<proteinExistence type="inferred from homology"/>
<comment type="function">
    <text evidence="1">Produces ATP from ADP in the presence of a proton gradient across the membrane. The catalytic sites are hosted primarily by the beta subunits.</text>
</comment>
<comment type="catalytic activity">
    <reaction evidence="1">
        <text>ATP + H2O + 4 H(+)(in) = ADP + phosphate + 5 H(+)(out)</text>
        <dbReference type="Rhea" id="RHEA:57720"/>
        <dbReference type="ChEBI" id="CHEBI:15377"/>
        <dbReference type="ChEBI" id="CHEBI:15378"/>
        <dbReference type="ChEBI" id="CHEBI:30616"/>
        <dbReference type="ChEBI" id="CHEBI:43474"/>
        <dbReference type="ChEBI" id="CHEBI:456216"/>
        <dbReference type="EC" id="7.1.2.2"/>
    </reaction>
</comment>
<comment type="subunit">
    <text evidence="1">F-type ATPases have 2 components, CF(1) - the catalytic core - and CF(0) - the membrane proton channel. CF(1) has five subunits: alpha(3), beta(3), gamma(1), delta(1), epsilon(1). CF(0) has three main subunits: a(1), b(2) and c(9-12). The alpha and beta chains form an alternating ring which encloses part of the gamma chain. CF(1) is attached to CF(0) by a central stalk formed by the gamma and epsilon chains, while a peripheral stalk is formed by the delta and b chains.</text>
</comment>
<comment type="subcellular location">
    <subcellularLocation>
        <location evidence="1">Cell inner membrane</location>
        <topology evidence="1">Peripheral membrane protein</topology>
    </subcellularLocation>
</comment>
<comment type="similarity">
    <text evidence="1">Belongs to the ATPase alpha/beta chains family.</text>
</comment>
<dbReference type="EC" id="7.1.2.2" evidence="1"/>
<dbReference type="EMBL" id="CP000538">
    <property type="protein sequence ID" value="EAQ71910.1"/>
    <property type="molecule type" value="Genomic_DNA"/>
</dbReference>
<dbReference type="RefSeq" id="WP_002852005.1">
    <property type="nucleotide sequence ID" value="NC_008787.1"/>
</dbReference>
<dbReference type="SMR" id="A1VXJ0"/>
<dbReference type="KEGG" id="cjj:CJJ81176_0142"/>
<dbReference type="eggNOG" id="COG0055">
    <property type="taxonomic scope" value="Bacteria"/>
</dbReference>
<dbReference type="HOGENOM" id="CLU_022398_0_2_7"/>
<dbReference type="Proteomes" id="UP000000646">
    <property type="component" value="Chromosome"/>
</dbReference>
<dbReference type="GO" id="GO:0005886">
    <property type="term" value="C:plasma membrane"/>
    <property type="evidence" value="ECO:0007669"/>
    <property type="project" value="UniProtKB-SubCell"/>
</dbReference>
<dbReference type="GO" id="GO:0045259">
    <property type="term" value="C:proton-transporting ATP synthase complex"/>
    <property type="evidence" value="ECO:0007669"/>
    <property type="project" value="UniProtKB-KW"/>
</dbReference>
<dbReference type="GO" id="GO:0005524">
    <property type="term" value="F:ATP binding"/>
    <property type="evidence" value="ECO:0007669"/>
    <property type="project" value="UniProtKB-UniRule"/>
</dbReference>
<dbReference type="GO" id="GO:0016887">
    <property type="term" value="F:ATP hydrolysis activity"/>
    <property type="evidence" value="ECO:0007669"/>
    <property type="project" value="InterPro"/>
</dbReference>
<dbReference type="GO" id="GO:0046933">
    <property type="term" value="F:proton-transporting ATP synthase activity, rotational mechanism"/>
    <property type="evidence" value="ECO:0007669"/>
    <property type="project" value="UniProtKB-UniRule"/>
</dbReference>
<dbReference type="CDD" id="cd18110">
    <property type="entry name" value="ATP-synt_F1_beta_C"/>
    <property type="match status" value="1"/>
</dbReference>
<dbReference type="CDD" id="cd18115">
    <property type="entry name" value="ATP-synt_F1_beta_N"/>
    <property type="match status" value="1"/>
</dbReference>
<dbReference type="CDD" id="cd01133">
    <property type="entry name" value="F1-ATPase_beta_CD"/>
    <property type="match status" value="1"/>
</dbReference>
<dbReference type="FunFam" id="1.10.1140.10:FF:000001">
    <property type="entry name" value="ATP synthase subunit beta"/>
    <property type="match status" value="1"/>
</dbReference>
<dbReference type="FunFam" id="3.40.50.300:FF:000004">
    <property type="entry name" value="ATP synthase subunit beta"/>
    <property type="match status" value="1"/>
</dbReference>
<dbReference type="Gene3D" id="2.40.10.170">
    <property type="match status" value="1"/>
</dbReference>
<dbReference type="Gene3D" id="1.10.1140.10">
    <property type="entry name" value="Bovine Mitochondrial F1-atpase, Atp Synthase Beta Chain, Chain D, domain 3"/>
    <property type="match status" value="1"/>
</dbReference>
<dbReference type="Gene3D" id="3.40.50.300">
    <property type="entry name" value="P-loop containing nucleotide triphosphate hydrolases"/>
    <property type="match status" value="1"/>
</dbReference>
<dbReference type="HAMAP" id="MF_01347">
    <property type="entry name" value="ATP_synth_beta_bact"/>
    <property type="match status" value="1"/>
</dbReference>
<dbReference type="InterPro" id="IPR003593">
    <property type="entry name" value="AAA+_ATPase"/>
</dbReference>
<dbReference type="InterPro" id="IPR055190">
    <property type="entry name" value="ATP-synt_VA_C"/>
</dbReference>
<dbReference type="InterPro" id="IPR005722">
    <property type="entry name" value="ATP_synth_F1_bsu"/>
</dbReference>
<dbReference type="InterPro" id="IPR020003">
    <property type="entry name" value="ATPase_a/bsu_AS"/>
</dbReference>
<dbReference type="InterPro" id="IPR050053">
    <property type="entry name" value="ATPase_alpha/beta_chains"/>
</dbReference>
<dbReference type="InterPro" id="IPR004100">
    <property type="entry name" value="ATPase_F1/V1/A1_a/bsu_N"/>
</dbReference>
<dbReference type="InterPro" id="IPR036121">
    <property type="entry name" value="ATPase_F1/V1/A1_a/bsu_N_sf"/>
</dbReference>
<dbReference type="InterPro" id="IPR000194">
    <property type="entry name" value="ATPase_F1/V1/A1_a/bsu_nucl-bd"/>
</dbReference>
<dbReference type="InterPro" id="IPR024034">
    <property type="entry name" value="ATPase_F1/V1_b/a_C"/>
</dbReference>
<dbReference type="InterPro" id="IPR027417">
    <property type="entry name" value="P-loop_NTPase"/>
</dbReference>
<dbReference type="NCBIfam" id="TIGR01039">
    <property type="entry name" value="atpD"/>
    <property type="match status" value="1"/>
</dbReference>
<dbReference type="PANTHER" id="PTHR15184">
    <property type="entry name" value="ATP SYNTHASE"/>
    <property type="match status" value="1"/>
</dbReference>
<dbReference type="PANTHER" id="PTHR15184:SF71">
    <property type="entry name" value="ATP SYNTHASE SUBUNIT BETA, MITOCHONDRIAL"/>
    <property type="match status" value="1"/>
</dbReference>
<dbReference type="Pfam" id="PF00006">
    <property type="entry name" value="ATP-synt_ab"/>
    <property type="match status" value="1"/>
</dbReference>
<dbReference type="Pfam" id="PF02874">
    <property type="entry name" value="ATP-synt_ab_N"/>
    <property type="match status" value="1"/>
</dbReference>
<dbReference type="Pfam" id="PF22919">
    <property type="entry name" value="ATP-synt_VA_C"/>
    <property type="match status" value="1"/>
</dbReference>
<dbReference type="SMART" id="SM00382">
    <property type="entry name" value="AAA"/>
    <property type="match status" value="1"/>
</dbReference>
<dbReference type="SUPFAM" id="SSF47917">
    <property type="entry name" value="C-terminal domain of alpha and beta subunits of F1 ATP synthase"/>
    <property type="match status" value="1"/>
</dbReference>
<dbReference type="SUPFAM" id="SSF50615">
    <property type="entry name" value="N-terminal domain of alpha and beta subunits of F1 ATP synthase"/>
    <property type="match status" value="1"/>
</dbReference>
<dbReference type="SUPFAM" id="SSF52540">
    <property type="entry name" value="P-loop containing nucleoside triphosphate hydrolases"/>
    <property type="match status" value="1"/>
</dbReference>
<dbReference type="PROSITE" id="PS00152">
    <property type="entry name" value="ATPASE_ALPHA_BETA"/>
    <property type="match status" value="1"/>
</dbReference>
<reference key="1">
    <citation type="submission" date="2006-12" db="EMBL/GenBank/DDBJ databases">
        <authorList>
            <person name="Fouts D.E."/>
            <person name="Nelson K.E."/>
            <person name="Sebastian Y."/>
        </authorList>
    </citation>
    <scope>NUCLEOTIDE SEQUENCE [LARGE SCALE GENOMIC DNA]</scope>
    <source>
        <strain>81-176</strain>
    </source>
</reference>
<evidence type="ECO:0000255" key="1">
    <source>
        <dbReference type="HAMAP-Rule" id="MF_01347"/>
    </source>
</evidence>
<feature type="chain" id="PRO_0000339507" description="ATP synthase subunit beta">
    <location>
        <begin position="1"/>
        <end position="465"/>
    </location>
</feature>
<feature type="binding site" evidence="1">
    <location>
        <begin position="152"/>
        <end position="159"/>
    </location>
    <ligand>
        <name>ATP</name>
        <dbReference type="ChEBI" id="CHEBI:30616"/>
    </ligand>
</feature>